<organism>
    <name type="scientific">Tursiops truncatus</name>
    <name type="common">Atlantic bottle-nosed dolphin</name>
    <name type="synonym">Delphinus truncatus</name>
    <dbReference type="NCBI Taxonomy" id="9739"/>
    <lineage>
        <taxon>Eukaryota</taxon>
        <taxon>Metazoa</taxon>
        <taxon>Chordata</taxon>
        <taxon>Craniata</taxon>
        <taxon>Vertebrata</taxon>
        <taxon>Euteleostomi</taxon>
        <taxon>Mammalia</taxon>
        <taxon>Eutheria</taxon>
        <taxon>Laurasiatheria</taxon>
        <taxon>Artiodactyla</taxon>
        <taxon>Whippomorpha</taxon>
        <taxon>Cetacea</taxon>
        <taxon>Odontoceti</taxon>
        <taxon>Delphinidae</taxon>
        <taxon>Tursiops</taxon>
    </lineage>
</organism>
<name>CYB_TURTR</name>
<sequence length="379" mass="42710">MTNIRKTHPLMKILNDAFIDLPTPSNISSWWNFGSLLGLCLIMQILTGLFLAMHYTPDTSTAFSSVAHICRDVNYGWFIRYLHANGASMFFICLYAHIGRGLYYGSYMFQETWNIGVLLLLTVMATAFVGYVLPWGQMSFWGATVITNLLSAIPYIGTTLVEWIWGGFSVDKATLTRFFAFHFILPFIITALAAVHLLFLHETGSNNPTGIPSNMDMIPFHPYYTIKDILGALLLILILLALTLFTPDLLGDPDNYTPANPLSTPAHIKPEWYFLFAYAILRSIPNKLGGVLALLLSILVLIFIPMLQTSKQRSMMFRPFSQLLFWTLIADLLTLTWIGGQPVEHPYIIVGQLASILYFLLILVLMPTAGLIENKLLKW</sequence>
<proteinExistence type="inferred from homology"/>
<dbReference type="EMBL" id="AF084093">
    <property type="protein sequence ID" value="AAD54470.1"/>
    <property type="molecule type" value="Genomic_DNA"/>
</dbReference>
<dbReference type="EMBL" id="AF084094">
    <property type="protein sequence ID" value="AAD54471.1"/>
    <property type="molecule type" value="Genomic_DNA"/>
</dbReference>
<dbReference type="EMBL" id="AF084095">
    <property type="protein sequence ID" value="AAD54472.1"/>
    <property type="molecule type" value="Genomic_DNA"/>
</dbReference>
<dbReference type="SMR" id="Q9TDJ9"/>
<dbReference type="STRING" id="9739.ENSTTRP00000016626"/>
<dbReference type="Proteomes" id="UP000245320">
    <property type="component" value="Mitochondrion MT"/>
</dbReference>
<dbReference type="GO" id="GO:0005743">
    <property type="term" value="C:mitochondrial inner membrane"/>
    <property type="evidence" value="ECO:0007669"/>
    <property type="project" value="UniProtKB-SubCell"/>
</dbReference>
<dbReference type="GO" id="GO:0045275">
    <property type="term" value="C:respiratory chain complex III"/>
    <property type="evidence" value="ECO:0007669"/>
    <property type="project" value="InterPro"/>
</dbReference>
<dbReference type="GO" id="GO:0046872">
    <property type="term" value="F:metal ion binding"/>
    <property type="evidence" value="ECO:0007669"/>
    <property type="project" value="UniProtKB-KW"/>
</dbReference>
<dbReference type="GO" id="GO:0008121">
    <property type="term" value="F:ubiquinol-cytochrome-c reductase activity"/>
    <property type="evidence" value="ECO:0007669"/>
    <property type="project" value="InterPro"/>
</dbReference>
<dbReference type="GO" id="GO:0006122">
    <property type="term" value="P:mitochondrial electron transport, ubiquinol to cytochrome c"/>
    <property type="evidence" value="ECO:0007669"/>
    <property type="project" value="TreeGrafter"/>
</dbReference>
<dbReference type="CDD" id="cd00290">
    <property type="entry name" value="cytochrome_b_C"/>
    <property type="match status" value="1"/>
</dbReference>
<dbReference type="CDD" id="cd00284">
    <property type="entry name" value="Cytochrome_b_N"/>
    <property type="match status" value="1"/>
</dbReference>
<dbReference type="FunFam" id="1.20.810.10:FF:000002">
    <property type="entry name" value="Cytochrome b"/>
    <property type="match status" value="1"/>
</dbReference>
<dbReference type="Gene3D" id="1.20.810.10">
    <property type="entry name" value="Cytochrome Bc1 Complex, Chain C"/>
    <property type="match status" value="1"/>
</dbReference>
<dbReference type="InterPro" id="IPR005798">
    <property type="entry name" value="Cyt_b/b6_C"/>
</dbReference>
<dbReference type="InterPro" id="IPR036150">
    <property type="entry name" value="Cyt_b/b6_C_sf"/>
</dbReference>
<dbReference type="InterPro" id="IPR005797">
    <property type="entry name" value="Cyt_b/b6_N"/>
</dbReference>
<dbReference type="InterPro" id="IPR027387">
    <property type="entry name" value="Cytb/b6-like_sf"/>
</dbReference>
<dbReference type="InterPro" id="IPR030689">
    <property type="entry name" value="Cytochrome_b"/>
</dbReference>
<dbReference type="InterPro" id="IPR048260">
    <property type="entry name" value="Cytochrome_b_C_euk/bac"/>
</dbReference>
<dbReference type="InterPro" id="IPR048259">
    <property type="entry name" value="Cytochrome_b_N_euk/bac"/>
</dbReference>
<dbReference type="InterPro" id="IPR016174">
    <property type="entry name" value="Di-haem_cyt_TM"/>
</dbReference>
<dbReference type="PANTHER" id="PTHR19271">
    <property type="entry name" value="CYTOCHROME B"/>
    <property type="match status" value="1"/>
</dbReference>
<dbReference type="PANTHER" id="PTHR19271:SF16">
    <property type="entry name" value="CYTOCHROME B"/>
    <property type="match status" value="1"/>
</dbReference>
<dbReference type="Pfam" id="PF00032">
    <property type="entry name" value="Cytochrom_B_C"/>
    <property type="match status" value="1"/>
</dbReference>
<dbReference type="Pfam" id="PF00033">
    <property type="entry name" value="Cytochrome_B"/>
    <property type="match status" value="1"/>
</dbReference>
<dbReference type="PIRSF" id="PIRSF038885">
    <property type="entry name" value="COB"/>
    <property type="match status" value="1"/>
</dbReference>
<dbReference type="SUPFAM" id="SSF81648">
    <property type="entry name" value="a domain/subunit of cytochrome bc1 complex (Ubiquinol-cytochrome c reductase)"/>
    <property type="match status" value="1"/>
</dbReference>
<dbReference type="SUPFAM" id="SSF81342">
    <property type="entry name" value="Transmembrane di-heme cytochromes"/>
    <property type="match status" value="1"/>
</dbReference>
<dbReference type="PROSITE" id="PS51003">
    <property type="entry name" value="CYTB_CTER"/>
    <property type="match status" value="1"/>
</dbReference>
<dbReference type="PROSITE" id="PS51002">
    <property type="entry name" value="CYTB_NTER"/>
    <property type="match status" value="1"/>
</dbReference>
<keyword id="KW-0249">Electron transport</keyword>
<keyword id="KW-0349">Heme</keyword>
<keyword id="KW-0408">Iron</keyword>
<keyword id="KW-0472">Membrane</keyword>
<keyword id="KW-0479">Metal-binding</keyword>
<keyword id="KW-0496">Mitochondrion</keyword>
<keyword id="KW-0999">Mitochondrion inner membrane</keyword>
<keyword id="KW-1185">Reference proteome</keyword>
<keyword id="KW-0679">Respiratory chain</keyword>
<keyword id="KW-0812">Transmembrane</keyword>
<keyword id="KW-1133">Transmembrane helix</keyword>
<keyword id="KW-0813">Transport</keyword>
<keyword id="KW-0830">Ubiquinone</keyword>
<accession>Q9TDJ9</accession>
<accession>Q9TDJ7</accession>
<accession>Q9TDJ8</accession>
<reference key="1">
    <citation type="journal article" date="1999" name="Mar. Mamm. Sci.">
        <title>Phylogenetic relationships among the delphinid cetaceans based on full cytochrome b sequences.</title>
        <authorList>
            <person name="LeDuc R.G."/>
            <person name="Perrin W.F."/>
            <person name="Dizon A.E."/>
        </authorList>
    </citation>
    <scope>NUCLEOTIDE SEQUENCE [GENOMIC DNA]</scope>
    <source>
        <strain>Isolate gulf of Mexico</strain>
        <strain>Isolate Pacific ocean</strain>
    </source>
</reference>
<feature type="chain" id="PRO_0000061693" description="Cytochrome b">
    <location>
        <begin position="1"/>
        <end position="379"/>
    </location>
</feature>
<feature type="transmembrane region" description="Helical" evidence="2">
    <location>
        <begin position="33"/>
        <end position="53"/>
    </location>
</feature>
<feature type="transmembrane region" description="Helical" evidence="2">
    <location>
        <begin position="77"/>
        <end position="98"/>
    </location>
</feature>
<feature type="transmembrane region" description="Helical" evidence="2">
    <location>
        <begin position="113"/>
        <end position="133"/>
    </location>
</feature>
<feature type="transmembrane region" description="Helical" evidence="2">
    <location>
        <begin position="178"/>
        <end position="198"/>
    </location>
</feature>
<feature type="transmembrane region" description="Helical" evidence="2">
    <location>
        <begin position="226"/>
        <end position="246"/>
    </location>
</feature>
<feature type="transmembrane region" description="Helical" evidence="2">
    <location>
        <begin position="288"/>
        <end position="308"/>
    </location>
</feature>
<feature type="transmembrane region" description="Helical" evidence="2">
    <location>
        <begin position="320"/>
        <end position="340"/>
    </location>
</feature>
<feature type="transmembrane region" description="Helical" evidence="2">
    <location>
        <begin position="347"/>
        <end position="367"/>
    </location>
</feature>
<feature type="binding site" description="axial binding residue" evidence="2">
    <location>
        <position position="83"/>
    </location>
    <ligand>
        <name>heme b</name>
        <dbReference type="ChEBI" id="CHEBI:60344"/>
        <label>b562</label>
    </ligand>
    <ligandPart>
        <name>Fe</name>
        <dbReference type="ChEBI" id="CHEBI:18248"/>
    </ligandPart>
</feature>
<feature type="binding site" description="axial binding residue" evidence="2">
    <location>
        <position position="97"/>
    </location>
    <ligand>
        <name>heme b</name>
        <dbReference type="ChEBI" id="CHEBI:60344"/>
        <label>b566</label>
    </ligand>
    <ligandPart>
        <name>Fe</name>
        <dbReference type="ChEBI" id="CHEBI:18248"/>
    </ligandPart>
</feature>
<feature type="binding site" description="axial binding residue" evidence="2">
    <location>
        <position position="182"/>
    </location>
    <ligand>
        <name>heme b</name>
        <dbReference type="ChEBI" id="CHEBI:60344"/>
        <label>b562</label>
    </ligand>
    <ligandPart>
        <name>Fe</name>
        <dbReference type="ChEBI" id="CHEBI:18248"/>
    </ligandPart>
</feature>
<feature type="binding site" description="axial binding residue" evidence="2">
    <location>
        <position position="196"/>
    </location>
    <ligand>
        <name>heme b</name>
        <dbReference type="ChEBI" id="CHEBI:60344"/>
        <label>b566</label>
    </ligand>
    <ligandPart>
        <name>Fe</name>
        <dbReference type="ChEBI" id="CHEBI:18248"/>
    </ligandPart>
</feature>
<feature type="binding site" evidence="2">
    <location>
        <position position="201"/>
    </location>
    <ligand>
        <name>a ubiquinone</name>
        <dbReference type="ChEBI" id="CHEBI:16389"/>
    </ligand>
</feature>
<feature type="sequence variant" description="In strain: Isolate gulf of Mexico and Isolate Pacific ocean.">
    <original>I</original>
    <variation>T</variation>
    <location>
        <position position="238"/>
    </location>
</feature>
<feature type="sequence variant" description="In strain: Isolate gulf of Mexico.">
    <original>T</original>
    <variation>A</variation>
    <location>
        <position position="246"/>
    </location>
</feature>
<feature type="sequence variant" description="In strain: Isolate gulf of Mexico.">
    <original>L</original>
    <variation>F</variation>
    <location>
        <position position="323"/>
    </location>
</feature>
<feature type="sequence variant" description="In strain: Isolate Pacific ocean.">
    <original>I</original>
    <variation>L</variation>
    <location>
        <position position="356"/>
    </location>
</feature>
<evidence type="ECO:0000250" key="1"/>
<evidence type="ECO:0000250" key="2">
    <source>
        <dbReference type="UniProtKB" id="P00157"/>
    </source>
</evidence>
<evidence type="ECO:0000255" key="3">
    <source>
        <dbReference type="PROSITE-ProRule" id="PRU00967"/>
    </source>
</evidence>
<evidence type="ECO:0000255" key="4">
    <source>
        <dbReference type="PROSITE-ProRule" id="PRU00968"/>
    </source>
</evidence>
<geneLocation type="mitochondrion"/>
<protein>
    <recommendedName>
        <fullName>Cytochrome b</fullName>
    </recommendedName>
    <alternativeName>
        <fullName>Complex III subunit 3</fullName>
    </alternativeName>
    <alternativeName>
        <fullName>Complex III subunit III</fullName>
    </alternativeName>
    <alternativeName>
        <fullName>Cytochrome b-c1 complex subunit 3</fullName>
    </alternativeName>
    <alternativeName>
        <fullName>Ubiquinol-cytochrome-c reductase complex cytochrome b subunit</fullName>
    </alternativeName>
</protein>
<gene>
    <name type="primary">MT-CYB</name>
    <name type="synonym">COB</name>
    <name type="synonym">CYTB</name>
    <name type="synonym">MTCYB</name>
</gene>
<comment type="function">
    <text evidence="2">Component of the ubiquinol-cytochrome c reductase complex (complex III or cytochrome b-c1 complex) that is part of the mitochondrial respiratory chain. The b-c1 complex mediates electron transfer from ubiquinol to cytochrome c. Contributes to the generation of a proton gradient across the mitochondrial membrane that is then used for ATP synthesis.</text>
</comment>
<comment type="cofactor">
    <cofactor evidence="2">
        <name>heme b</name>
        <dbReference type="ChEBI" id="CHEBI:60344"/>
    </cofactor>
    <text evidence="2">Binds 2 heme b groups non-covalently.</text>
</comment>
<comment type="subunit">
    <text evidence="2">The cytochrome bc1 complex contains 11 subunits: 3 respiratory subunits (MT-CYB, CYC1 and UQCRFS1), 2 core proteins (UQCRC1 and UQCRC2) and 6 low-molecular weight proteins (UQCRH/QCR6, UQCRB/QCR7, UQCRQ/QCR8, UQCR10/QCR9, UQCR11/QCR10 and a cleavage product of UQCRFS1). This cytochrome bc1 complex then forms a dimer.</text>
</comment>
<comment type="subcellular location">
    <subcellularLocation>
        <location evidence="2">Mitochondrion inner membrane</location>
        <topology evidence="2">Multi-pass membrane protein</topology>
    </subcellularLocation>
</comment>
<comment type="miscellaneous">
    <text evidence="1">Heme 1 (or BL or b562) is low-potential and absorbs at about 562 nm, and heme 2 (or BH or b566) is high-potential and absorbs at about 566 nm.</text>
</comment>
<comment type="similarity">
    <text evidence="3 4">Belongs to the cytochrome b family.</text>
</comment>
<comment type="caution">
    <text evidence="2">The full-length protein contains only eight transmembrane helices, not nine as predicted by bioinformatics tools.</text>
</comment>